<accession>A4JC03</accession>
<organism>
    <name type="scientific">Burkholderia vietnamiensis (strain G4 / LMG 22486)</name>
    <name type="common">Burkholderia cepacia (strain R1808)</name>
    <dbReference type="NCBI Taxonomy" id="269482"/>
    <lineage>
        <taxon>Bacteria</taxon>
        <taxon>Pseudomonadati</taxon>
        <taxon>Pseudomonadota</taxon>
        <taxon>Betaproteobacteria</taxon>
        <taxon>Burkholderiales</taxon>
        <taxon>Burkholderiaceae</taxon>
        <taxon>Burkholderia</taxon>
        <taxon>Burkholderia cepacia complex</taxon>
    </lineage>
</organism>
<reference key="1">
    <citation type="submission" date="2007-03" db="EMBL/GenBank/DDBJ databases">
        <title>Complete sequence of chromosome 1 of Burkholderia vietnamiensis G4.</title>
        <authorList>
            <consortium name="US DOE Joint Genome Institute"/>
            <person name="Copeland A."/>
            <person name="Lucas S."/>
            <person name="Lapidus A."/>
            <person name="Barry K."/>
            <person name="Detter J.C."/>
            <person name="Glavina del Rio T."/>
            <person name="Hammon N."/>
            <person name="Israni S."/>
            <person name="Dalin E."/>
            <person name="Tice H."/>
            <person name="Pitluck S."/>
            <person name="Chain P."/>
            <person name="Malfatti S."/>
            <person name="Shin M."/>
            <person name="Vergez L."/>
            <person name="Schmutz J."/>
            <person name="Larimer F."/>
            <person name="Land M."/>
            <person name="Hauser L."/>
            <person name="Kyrpides N."/>
            <person name="Tiedje J."/>
            <person name="Richardson P."/>
        </authorList>
    </citation>
    <scope>NUCLEOTIDE SEQUENCE [LARGE SCALE GENOMIC DNA]</scope>
    <source>
        <strain>G4 / LMG 22486</strain>
    </source>
</reference>
<name>CH601_BURVG</name>
<protein>
    <recommendedName>
        <fullName evidence="1">Chaperonin GroEL 1</fullName>
        <ecNumber evidence="1">5.6.1.7</ecNumber>
    </recommendedName>
    <alternativeName>
        <fullName evidence="1">60 kDa chaperonin 1</fullName>
    </alternativeName>
    <alternativeName>
        <fullName evidence="1">Chaperonin-60 1</fullName>
        <shortName evidence="1">Cpn60 1</shortName>
    </alternativeName>
</protein>
<gene>
    <name evidence="1" type="primary">groEL1</name>
    <name evidence="1" type="synonym">groL1</name>
    <name type="ordered locus">Bcep1808_0794</name>
</gene>
<keyword id="KW-0067">ATP-binding</keyword>
<keyword id="KW-0143">Chaperone</keyword>
<keyword id="KW-0963">Cytoplasm</keyword>
<keyword id="KW-0413">Isomerase</keyword>
<keyword id="KW-0547">Nucleotide-binding</keyword>
<proteinExistence type="inferred from homology"/>
<feature type="chain" id="PRO_0000331991" description="Chaperonin GroEL 1">
    <location>
        <begin position="1"/>
        <end position="546"/>
    </location>
</feature>
<feature type="region of interest" description="Disordered" evidence="2">
    <location>
        <begin position="526"/>
        <end position="546"/>
    </location>
</feature>
<feature type="compositionally biased region" description="Gly residues" evidence="2">
    <location>
        <begin position="534"/>
        <end position="546"/>
    </location>
</feature>
<feature type="binding site" evidence="1">
    <location>
        <begin position="30"/>
        <end position="33"/>
    </location>
    <ligand>
        <name>ATP</name>
        <dbReference type="ChEBI" id="CHEBI:30616"/>
    </ligand>
</feature>
<feature type="binding site" evidence="1">
    <location>
        <position position="51"/>
    </location>
    <ligand>
        <name>ATP</name>
        <dbReference type="ChEBI" id="CHEBI:30616"/>
    </ligand>
</feature>
<feature type="binding site" evidence="1">
    <location>
        <begin position="87"/>
        <end position="91"/>
    </location>
    <ligand>
        <name>ATP</name>
        <dbReference type="ChEBI" id="CHEBI:30616"/>
    </ligand>
</feature>
<feature type="binding site" evidence="1">
    <location>
        <position position="415"/>
    </location>
    <ligand>
        <name>ATP</name>
        <dbReference type="ChEBI" id="CHEBI:30616"/>
    </ligand>
</feature>
<feature type="binding site" evidence="1">
    <location>
        <begin position="479"/>
        <end position="481"/>
    </location>
    <ligand>
        <name>ATP</name>
        <dbReference type="ChEBI" id="CHEBI:30616"/>
    </ligand>
</feature>
<feature type="binding site" evidence="1">
    <location>
        <position position="495"/>
    </location>
    <ligand>
        <name>ATP</name>
        <dbReference type="ChEBI" id="CHEBI:30616"/>
    </ligand>
</feature>
<sequence>MAAKDVVFGDSARSKMVEGVNILANAVKVTLGPKGRNVVLERSFGGPTVTKDGVSVAKEIELKDKLQNMGAQMVKEVASKTSDNAGDGTTTATVLAQSIVREGMKYVASGMNPMDLKRGIDKAVAAAVEELKKISKPCTTNKEIAQVGSISANSDSSIGDRIAEAMDKVGKEGVITVEDGKSLADELDVVEGMQFDRGYLSPYFINNPDKQVAVLDNPFVLLHDKKVSNIRDLLPVLEQVAKAGRPLLIIAEDVEGEALATLVVNNIRGILKTVAVKAPGFGDRRKAMLEDIAILTGGQVIAEETGLTLEKATLAELGQAKRIEVGKENTTIIDGAGEAASIEARVKQVRTQIEEATSDYDREKLQERVAKLAGGVAVIKVGAATEVEMKEKKARVEDALHATRAAVEEGIVAGGGVALIRARTAIAGLTGANADQNAGIKIVLRAMEEPLRQIVTNGGEEASVVVAAVAAGKGNYGYNAATGEYVDMVEAGVVDPTKVTRTALQNAASVAGLLLTTDAAVAELPKEDAPMPGGMPGGMGGMGMDM</sequence>
<evidence type="ECO:0000255" key="1">
    <source>
        <dbReference type="HAMAP-Rule" id="MF_00600"/>
    </source>
</evidence>
<evidence type="ECO:0000256" key="2">
    <source>
        <dbReference type="SAM" id="MobiDB-lite"/>
    </source>
</evidence>
<dbReference type="EC" id="5.6.1.7" evidence="1"/>
<dbReference type="EMBL" id="CP000614">
    <property type="protein sequence ID" value="ABO53806.1"/>
    <property type="molecule type" value="Genomic_DNA"/>
</dbReference>
<dbReference type="SMR" id="A4JC03"/>
<dbReference type="KEGG" id="bvi:Bcep1808_0794"/>
<dbReference type="eggNOG" id="COG0459">
    <property type="taxonomic scope" value="Bacteria"/>
</dbReference>
<dbReference type="HOGENOM" id="CLU_016503_3_0_4"/>
<dbReference type="Proteomes" id="UP000002287">
    <property type="component" value="Chromosome 1"/>
</dbReference>
<dbReference type="GO" id="GO:0005737">
    <property type="term" value="C:cytoplasm"/>
    <property type="evidence" value="ECO:0007669"/>
    <property type="project" value="UniProtKB-SubCell"/>
</dbReference>
<dbReference type="GO" id="GO:0005524">
    <property type="term" value="F:ATP binding"/>
    <property type="evidence" value="ECO:0007669"/>
    <property type="project" value="UniProtKB-UniRule"/>
</dbReference>
<dbReference type="GO" id="GO:0140662">
    <property type="term" value="F:ATP-dependent protein folding chaperone"/>
    <property type="evidence" value="ECO:0007669"/>
    <property type="project" value="InterPro"/>
</dbReference>
<dbReference type="GO" id="GO:0016853">
    <property type="term" value="F:isomerase activity"/>
    <property type="evidence" value="ECO:0007669"/>
    <property type="project" value="UniProtKB-KW"/>
</dbReference>
<dbReference type="GO" id="GO:0051082">
    <property type="term" value="F:unfolded protein binding"/>
    <property type="evidence" value="ECO:0007669"/>
    <property type="project" value="UniProtKB-UniRule"/>
</dbReference>
<dbReference type="GO" id="GO:0042026">
    <property type="term" value="P:protein refolding"/>
    <property type="evidence" value="ECO:0007669"/>
    <property type="project" value="UniProtKB-UniRule"/>
</dbReference>
<dbReference type="CDD" id="cd03344">
    <property type="entry name" value="GroEL"/>
    <property type="match status" value="1"/>
</dbReference>
<dbReference type="FunFam" id="1.10.560.10:FF:000001">
    <property type="entry name" value="60 kDa chaperonin"/>
    <property type="match status" value="1"/>
</dbReference>
<dbReference type="FunFam" id="3.50.7.10:FF:000001">
    <property type="entry name" value="60 kDa chaperonin"/>
    <property type="match status" value="1"/>
</dbReference>
<dbReference type="Gene3D" id="3.50.7.10">
    <property type="entry name" value="GroEL"/>
    <property type="match status" value="1"/>
</dbReference>
<dbReference type="Gene3D" id="1.10.560.10">
    <property type="entry name" value="GroEL-like equatorial domain"/>
    <property type="match status" value="1"/>
</dbReference>
<dbReference type="Gene3D" id="3.30.260.10">
    <property type="entry name" value="TCP-1-like chaperonin intermediate domain"/>
    <property type="match status" value="1"/>
</dbReference>
<dbReference type="HAMAP" id="MF_00600">
    <property type="entry name" value="CH60"/>
    <property type="match status" value="1"/>
</dbReference>
<dbReference type="InterPro" id="IPR018370">
    <property type="entry name" value="Chaperonin_Cpn60_CS"/>
</dbReference>
<dbReference type="InterPro" id="IPR001844">
    <property type="entry name" value="Cpn60/GroEL"/>
</dbReference>
<dbReference type="InterPro" id="IPR002423">
    <property type="entry name" value="Cpn60/GroEL/TCP-1"/>
</dbReference>
<dbReference type="InterPro" id="IPR027409">
    <property type="entry name" value="GroEL-like_apical_dom_sf"/>
</dbReference>
<dbReference type="InterPro" id="IPR027413">
    <property type="entry name" value="GROEL-like_equatorial_sf"/>
</dbReference>
<dbReference type="InterPro" id="IPR027410">
    <property type="entry name" value="TCP-1-like_intermed_sf"/>
</dbReference>
<dbReference type="NCBIfam" id="TIGR02348">
    <property type="entry name" value="GroEL"/>
    <property type="match status" value="1"/>
</dbReference>
<dbReference type="NCBIfam" id="NF000592">
    <property type="entry name" value="PRK00013.1"/>
    <property type="match status" value="1"/>
</dbReference>
<dbReference type="NCBIfam" id="NF009487">
    <property type="entry name" value="PRK12849.1"/>
    <property type="match status" value="1"/>
</dbReference>
<dbReference type="NCBIfam" id="NF009488">
    <property type="entry name" value="PRK12850.1"/>
    <property type="match status" value="1"/>
</dbReference>
<dbReference type="NCBIfam" id="NF009489">
    <property type="entry name" value="PRK12851.1"/>
    <property type="match status" value="1"/>
</dbReference>
<dbReference type="PANTHER" id="PTHR45633">
    <property type="entry name" value="60 KDA HEAT SHOCK PROTEIN, MITOCHONDRIAL"/>
    <property type="match status" value="1"/>
</dbReference>
<dbReference type="Pfam" id="PF00118">
    <property type="entry name" value="Cpn60_TCP1"/>
    <property type="match status" value="1"/>
</dbReference>
<dbReference type="PRINTS" id="PR00298">
    <property type="entry name" value="CHAPERONIN60"/>
</dbReference>
<dbReference type="SUPFAM" id="SSF52029">
    <property type="entry name" value="GroEL apical domain-like"/>
    <property type="match status" value="1"/>
</dbReference>
<dbReference type="SUPFAM" id="SSF48592">
    <property type="entry name" value="GroEL equatorial domain-like"/>
    <property type="match status" value="1"/>
</dbReference>
<dbReference type="SUPFAM" id="SSF54849">
    <property type="entry name" value="GroEL-intermediate domain like"/>
    <property type="match status" value="1"/>
</dbReference>
<dbReference type="PROSITE" id="PS00296">
    <property type="entry name" value="CHAPERONINS_CPN60"/>
    <property type="match status" value="1"/>
</dbReference>
<comment type="function">
    <text evidence="1">Together with its co-chaperonin GroES, plays an essential role in assisting protein folding. The GroEL-GroES system forms a nano-cage that allows encapsulation of the non-native substrate proteins and provides a physical environment optimized to promote and accelerate protein folding.</text>
</comment>
<comment type="catalytic activity">
    <reaction evidence="1">
        <text>ATP + H2O + a folded polypeptide = ADP + phosphate + an unfolded polypeptide.</text>
        <dbReference type="EC" id="5.6.1.7"/>
    </reaction>
</comment>
<comment type="subunit">
    <text evidence="1">Forms a cylinder of 14 subunits composed of two heptameric rings stacked back-to-back. Interacts with the co-chaperonin GroES.</text>
</comment>
<comment type="subcellular location">
    <subcellularLocation>
        <location evidence="1">Cytoplasm</location>
    </subcellularLocation>
</comment>
<comment type="similarity">
    <text evidence="1">Belongs to the chaperonin (HSP60) family.</text>
</comment>